<accession>B7MHX9</accession>
<proteinExistence type="inferred from homology"/>
<evidence type="ECO:0000255" key="1">
    <source>
        <dbReference type="HAMAP-Rule" id="MF_01218"/>
    </source>
</evidence>
<name>UPP_ECO45</name>
<keyword id="KW-0021">Allosteric enzyme</keyword>
<keyword id="KW-0328">Glycosyltransferase</keyword>
<keyword id="KW-0342">GTP-binding</keyword>
<keyword id="KW-0460">Magnesium</keyword>
<keyword id="KW-0547">Nucleotide-binding</keyword>
<keyword id="KW-1185">Reference proteome</keyword>
<keyword id="KW-0808">Transferase</keyword>
<protein>
    <recommendedName>
        <fullName evidence="1">Uracil phosphoribosyltransferase</fullName>
        <ecNumber evidence="1">2.4.2.9</ecNumber>
    </recommendedName>
    <alternativeName>
        <fullName evidence="1">UMP pyrophosphorylase</fullName>
    </alternativeName>
    <alternativeName>
        <fullName evidence="1">UPRTase</fullName>
    </alternativeName>
</protein>
<organism>
    <name type="scientific">Escherichia coli O45:K1 (strain S88 / ExPEC)</name>
    <dbReference type="NCBI Taxonomy" id="585035"/>
    <lineage>
        <taxon>Bacteria</taxon>
        <taxon>Pseudomonadati</taxon>
        <taxon>Pseudomonadota</taxon>
        <taxon>Gammaproteobacteria</taxon>
        <taxon>Enterobacterales</taxon>
        <taxon>Enterobacteriaceae</taxon>
        <taxon>Escherichia</taxon>
    </lineage>
</organism>
<dbReference type="EC" id="2.4.2.9" evidence="1"/>
<dbReference type="EMBL" id="CU928161">
    <property type="protein sequence ID" value="CAR03937.1"/>
    <property type="molecule type" value="Genomic_DNA"/>
</dbReference>
<dbReference type="RefSeq" id="WP_001295473.1">
    <property type="nucleotide sequence ID" value="NC_011742.1"/>
</dbReference>
<dbReference type="SMR" id="B7MHX9"/>
<dbReference type="GeneID" id="93774638"/>
<dbReference type="KEGG" id="ecz:ECS88_2669"/>
<dbReference type="HOGENOM" id="CLU_067096_2_2_6"/>
<dbReference type="UniPathway" id="UPA00574">
    <property type="reaction ID" value="UER00636"/>
</dbReference>
<dbReference type="Proteomes" id="UP000000747">
    <property type="component" value="Chromosome"/>
</dbReference>
<dbReference type="GO" id="GO:0005525">
    <property type="term" value="F:GTP binding"/>
    <property type="evidence" value="ECO:0007669"/>
    <property type="project" value="UniProtKB-KW"/>
</dbReference>
<dbReference type="GO" id="GO:0000287">
    <property type="term" value="F:magnesium ion binding"/>
    <property type="evidence" value="ECO:0007669"/>
    <property type="project" value="UniProtKB-UniRule"/>
</dbReference>
<dbReference type="GO" id="GO:0004845">
    <property type="term" value="F:uracil phosphoribosyltransferase activity"/>
    <property type="evidence" value="ECO:0007669"/>
    <property type="project" value="UniProtKB-UniRule"/>
</dbReference>
<dbReference type="GO" id="GO:0044206">
    <property type="term" value="P:UMP salvage"/>
    <property type="evidence" value="ECO:0007669"/>
    <property type="project" value="UniProtKB-UniRule"/>
</dbReference>
<dbReference type="GO" id="GO:0006223">
    <property type="term" value="P:uracil salvage"/>
    <property type="evidence" value="ECO:0007669"/>
    <property type="project" value="InterPro"/>
</dbReference>
<dbReference type="CDD" id="cd06223">
    <property type="entry name" value="PRTases_typeI"/>
    <property type="match status" value="1"/>
</dbReference>
<dbReference type="FunFam" id="3.40.50.2020:FF:000003">
    <property type="entry name" value="Uracil phosphoribosyltransferase"/>
    <property type="match status" value="1"/>
</dbReference>
<dbReference type="Gene3D" id="3.40.50.2020">
    <property type="match status" value="1"/>
</dbReference>
<dbReference type="HAMAP" id="MF_01218_B">
    <property type="entry name" value="Upp_B"/>
    <property type="match status" value="1"/>
</dbReference>
<dbReference type="InterPro" id="IPR000836">
    <property type="entry name" value="PRibTrfase_dom"/>
</dbReference>
<dbReference type="InterPro" id="IPR029057">
    <property type="entry name" value="PRTase-like"/>
</dbReference>
<dbReference type="InterPro" id="IPR034332">
    <property type="entry name" value="Upp_B"/>
</dbReference>
<dbReference type="InterPro" id="IPR050054">
    <property type="entry name" value="UPRTase/APRTase"/>
</dbReference>
<dbReference type="InterPro" id="IPR005765">
    <property type="entry name" value="Ura_phspho_trans"/>
</dbReference>
<dbReference type="NCBIfam" id="NF001097">
    <property type="entry name" value="PRK00129.1"/>
    <property type="match status" value="1"/>
</dbReference>
<dbReference type="NCBIfam" id="TIGR01091">
    <property type="entry name" value="upp"/>
    <property type="match status" value="1"/>
</dbReference>
<dbReference type="PANTHER" id="PTHR32315">
    <property type="entry name" value="ADENINE PHOSPHORIBOSYLTRANSFERASE"/>
    <property type="match status" value="1"/>
</dbReference>
<dbReference type="PANTHER" id="PTHR32315:SF4">
    <property type="entry name" value="URACIL PHOSPHORIBOSYLTRANSFERASE, CHLOROPLASTIC"/>
    <property type="match status" value="1"/>
</dbReference>
<dbReference type="Pfam" id="PF14681">
    <property type="entry name" value="UPRTase"/>
    <property type="match status" value="1"/>
</dbReference>
<dbReference type="SUPFAM" id="SSF53271">
    <property type="entry name" value="PRTase-like"/>
    <property type="match status" value="1"/>
</dbReference>
<feature type="chain" id="PRO_1000139117" description="Uracil phosphoribosyltransferase">
    <location>
        <begin position="1"/>
        <end position="208"/>
    </location>
</feature>
<feature type="binding site" evidence="1">
    <location>
        <position position="78"/>
    </location>
    <ligand>
        <name>5-phospho-alpha-D-ribose 1-diphosphate</name>
        <dbReference type="ChEBI" id="CHEBI:58017"/>
    </ligand>
</feature>
<feature type="binding site" evidence="1">
    <location>
        <position position="103"/>
    </location>
    <ligand>
        <name>5-phospho-alpha-D-ribose 1-diphosphate</name>
        <dbReference type="ChEBI" id="CHEBI:58017"/>
    </ligand>
</feature>
<feature type="binding site" evidence="1">
    <location>
        <begin position="130"/>
        <end position="138"/>
    </location>
    <ligand>
        <name>5-phospho-alpha-D-ribose 1-diphosphate</name>
        <dbReference type="ChEBI" id="CHEBI:58017"/>
    </ligand>
</feature>
<feature type="binding site" evidence="1">
    <location>
        <position position="193"/>
    </location>
    <ligand>
        <name>uracil</name>
        <dbReference type="ChEBI" id="CHEBI:17568"/>
    </ligand>
</feature>
<feature type="binding site" evidence="1">
    <location>
        <begin position="198"/>
        <end position="200"/>
    </location>
    <ligand>
        <name>uracil</name>
        <dbReference type="ChEBI" id="CHEBI:17568"/>
    </ligand>
</feature>
<feature type="binding site" evidence="1">
    <location>
        <position position="199"/>
    </location>
    <ligand>
        <name>5-phospho-alpha-D-ribose 1-diphosphate</name>
        <dbReference type="ChEBI" id="CHEBI:58017"/>
    </ligand>
</feature>
<comment type="function">
    <text evidence="1">Catalyzes the conversion of uracil and 5-phospho-alpha-D-ribose 1-diphosphate (PRPP) to UMP and diphosphate.</text>
</comment>
<comment type="catalytic activity">
    <reaction evidence="1">
        <text>UMP + diphosphate = 5-phospho-alpha-D-ribose 1-diphosphate + uracil</text>
        <dbReference type="Rhea" id="RHEA:13017"/>
        <dbReference type="ChEBI" id="CHEBI:17568"/>
        <dbReference type="ChEBI" id="CHEBI:33019"/>
        <dbReference type="ChEBI" id="CHEBI:57865"/>
        <dbReference type="ChEBI" id="CHEBI:58017"/>
        <dbReference type="EC" id="2.4.2.9"/>
    </reaction>
</comment>
<comment type="cofactor">
    <cofactor evidence="1">
        <name>Mg(2+)</name>
        <dbReference type="ChEBI" id="CHEBI:18420"/>
    </cofactor>
    <text evidence="1">Binds 1 Mg(2+) ion per subunit. The magnesium is bound as Mg-PRPP.</text>
</comment>
<comment type="activity regulation">
    <text evidence="1">Allosterically activated by GTP.</text>
</comment>
<comment type="pathway">
    <text evidence="1">Pyrimidine metabolism; UMP biosynthesis via salvage pathway; UMP from uracil: step 1/1.</text>
</comment>
<comment type="similarity">
    <text evidence="1">Belongs to the UPRTase family.</text>
</comment>
<gene>
    <name evidence="1" type="primary">upp</name>
    <name type="ordered locus">ECS88_2669</name>
</gene>
<sequence length="208" mass="22533">MKIVEVKHPLVKHKLGLMREQDISTKRFRELASEVGSLLTYEATADLETEKVTIEGWNGPVEIDQIKGKKITVVPILRAGLGMMDGVLENVPSARISVVGMYRNEETLEPVPYFQKLVSNIDERMALIVDPMLATGGSVIATIDLLKKAGCSSIKVLVLVAAPEGIAALEKAHPDVELYTASIDQGLNEHGYIIPGLGDAGDKIFGTK</sequence>
<reference key="1">
    <citation type="journal article" date="2009" name="PLoS Genet.">
        <title>Organised genome dynamics in the Escherichia coli species results in highly diverse adaptive paths.</title>
        <authorList>
            <person name="Touchon M."/>
            <person name="Hoede C."/>
            <person name="Tenaillon O."/>
            <person name="Barbe V."/>
            <person name="Baeriswyl S."/>
            <person name="Bidet P."/>
            <person name="Bingen E."/>
            <person name="Bonacorsi S."/>
            <person name="Bouchier C."/>
            <person name="Bouvet O."/>
            <person name="Calteau A."/>
            <person name="Chiapello H."/>
            <person name="Clermont O."/>
            <person name="Cruveiller S."/>
            <person name="Danchin A."/>
            <person name="Diard M."/>
            <person name="Dossat C."/>
            <person name="Karoui M.E."/>
            <person name="Frapy E."/>
            <person name="Garry L."/>
            <person name="Ghigo J.M."/>
            <person name="Gilles A.M."/>
            <person name="Johnson J."/>
            <person name="Le Bouguenec C."/>
            <person name="Lescat M."/>
            <person name="Mangenot S."/>
            <person name="Martinez-Jehanne V."/>
            <person name="Matic I."/>
            <person name="Nassif X."/>
            <person name="Oztas S."/>
            <person name="Petit M.A."/>
            <person name="Pichon C."/>
            <person name="Rouy Z."/>
            <person name="Ruf C.S."/>
            <person name="Schneider D."/>
            <person name="Tourret J."/>
            <person name="Vacherie B."/>
            <person name="Vallenet D."/>
            <person name="Medigue C."/>
            <person name="Rocha E.P.C."/>
            <person name="Denamur E."/>
        </authorList>
    </citation>
    <scope>NUCLEOTIDE SEQUENCE [LARGE SCALE GENOMIC DNA]</scope>
    <source>
        <strain>S88 / ExPEC</strain>
    </source>
</reference>